<comment type="function">
    <text evidence="1">Involved in protein export. Acts as a chaperone by maintaining the newly synthesized protein in an open conformation. Functions as a peptidyl-prolyl cis-trans isomerase.</text>
</comment>
<comment type="catalytic activity">
    <reaction evidence="1">
        <text>[protein]-peptidylproline (omega=180) = [protein]-peptidylproline (omega=0)</text>
        <dbReference type="Rhea" id="RHEA:16237"/>
        <dbReference type="Rhea" id="RHEA-COMP:10747"/>
        <dbReference type="Rhea" id="RHEA-COMP:10748"/>
        <dbReference type="ChEBI" id="CHEBI:83833"/>
        <dbReference type="ChEBI" id="CHEBI:83834"/>
        <dbReference type="EC" id="5.2.1.8"/>
    </reaction>
</comment>
<comment type="subcellular location">
    <subcellularLocation>
        <location>Cytoplasm</location>
    </subcellularLocation>
    <text evidence="1">About half TF is bound to the ribosome near the polypeptide exit tunnel while the other half is free in the cytoplasm.</text>
</comment>
<comment type="domain">
    <text evidence="1">Consists of 3 domains; the N-terminus binds the ribosome, the middle domain has PPIase activity, while the C-terminus has intrinsic chaperone activity on its own.</text>
</comment>
<comment type="similarity">
    <text evidence="1">Belongs to the FKBP-type PPIase family. Tig subfamily.</text>
</comment>
<protein>
    <recommendedName>
        <fullName evidence="1">Trigger factor</fullName>
        <shortName evidence="1">TF</shortName>
        <ecNumber evidence="1">5.2.1.8</ecNumber>
    </recommendedName>
    <alternativeName>
        <fullName evidence="1">PPIase</fullName>
    </alternativeName>
</protein>
<keyword id="KW-0131">Cell cycle</keyword>
<keyword id="KW-0132">Cell division</keyword>
<keyword id="KW-0143">Chaperone</keyword>
<keyword id="KW-0963">Cytoplasm</keyword>
<keyword id="KW-0413">Isomerase</keyword>
<keyword id="KW-1185">Reference proteome</keyword>
<keyword id="KW-0697">Rotamase</keyword>
<gene>
    <name evidence="1" type="primary">tig</name>
    <name type="ordered locus">MAB_1580</name>
</gene>
<proteinExistence type="inferred from homology"/>
<reference key="1">
    <citation type="journal article" date="2009" name="PLoS ONE">
        <title>Non mycobacterial virulence genes in the genome of the emerging pathogen Mycobacterium abscessus.</title>
        <authorList>
            <person name="Ripoll F."/>
            <person name="Pasek S."/>
            <person name="Schenowitz C."/>
            <person name="Dossat C."/>
            <person name="Barbe V."/>
            <person name="Rottman M."/>
            <person name="Macheras E."/>
            <person name="Heym B."/>
            <person name="Herrmann J.L."/>
            <person name="Daffe M."/>
            <person name="Brosch R."/>
            <person name="Risler J.L."/>
            <person name="Gaillard J.L."/>
        </authorList>
    </citation>
    <scope>NUCLEOTIDE SEQUENCE [LARGE SCALE GENOMIC DNA]</scope>
    <source>
        <strain>ATCC 19977 / DSM 44196 / CCUG 20993 / CIP 104536 / JCM 13569 / NCTC 13031 / TMC 1543 / L948</strain>
    </source>
</reference>
<evidence type="ECO:0000255" key="1">
    <source>
        <dbReference type="HAMAP-Rule" id="MF_00303"/>
    </source>
</evidence>
<evidence type="ECO:0000256" key="2">
    <source>
        <dbReference type="SAM" id="MobiDB-lite"/>
    </source>
</evidence>
<sequence>MKSTVEKLSPTRVRINVEVPFAELEPDFSKAYKELAQQVRLPGFRPGKAPAKLLEARVGRAAVLEQVVNAALPARYSEAVTASDVKPLGQPEIEVTKIEDGQELTFTAEVDVRPEIELPDLSGVAVTVKPVTVEDSEVEAELDALRARFGTLKGVERAAENGDFVSIDLSATVDGKEVEEAATTGLSHEIGSGQLIDGLDEAIIGLKAGEEKVFTTKLAAGEFAGQEAEVTVKVGSIKERELPDADDDFAQLASEFDTIGELKDSLTEQVKGRKRIAQADEIRDETITALLDKIEIPVPEKILEEQIGNNLHEAVHGLDHNEERLNELLQEQGSSREEFDKDMRESATKSIKTELLLDVIADKFDINVDQQDLTERLVLMSRQYGIEPQQLVQYLTQQQQLPGLYVDVRRGKAIAEVIRQAKVTDSTGADVDVDAVLGPRRGGADEAGAEAEAAEEKPAKAKKSADSEKTDKSEKAEKKSKKKSKDDDAE</sequence>
<feature type="chain" id="PRO_1000115556" description="Trigger factor">
    <location>
        <begin position="1"/>
        <end position="490"/>
    </location>
</feature>
<feature type="domain" description="PPIase FKBP-type" evidence="1">
    <location>
        <begin position="162"/>
        <end position="243"/>
    </location>
</feature>
<feature type="region of interest" description="Disordered" evidence="2">
    <location>
        <begin position="433"/>
        <end position="490"/>
    </location>
</feature>
<feature type="compositionally biased region" description="Basic and acidic residues" evidence="2">
    <location>
        <begin position="454"/>
        <end position="477"/>
    </location>
</feature>
<name>TIG_MYCA9</name>
<dbReference type="EC" id="5.2.1.8" evidence="1"/>
<dbReference type="EMBL" id="CU458896">
    <property type="protein sequence ID" value="CAM61665.1"/>
    <property type="molecule type" value="Genomic_DNA"/>
</dbReference>
<dbReference type="RefSeq" id="WP_005093116.1">
    <property type="nucleotide sequence ID" value="NZ_MLCG01000002.1"/>
</dbReference>
<dbReference type="SMR" id="B1MMV3"/>
<dbReference type="GeneID" id="93378532"/>
<dbReference type="KEGG" id="mab:MAB_1580"/>
<dbReference type="Proteomes" id="UP000007137">
    <property type="component" value="Chromosome"/>
</dbReference>
<dbReference type="GO" id="GO:0005737">
    <property type="term" value="C:cytoplasm"/>
    <property type="evidence" value="ECO:0007669"/>
    <property type="project" value="UniProtKB-SubCell"/>
</dbReference>
<dbReference type="GO" id="GO:0003755">
    <property type="term" value="F:peptidyl-prolyl cis-trans isomerase activity"/>
    <property type="evidence" value="ECO:0007669"/>
    <property type="project" value="UniProtKB-UniRule"/>
</dbReference>
<dbReference type="GO" id="GO:0044183">
    <property type="term" value="F:protein folding chaperone"/>
    <property type="evidence" value="ECO:0007669"/>
    <property type="project" value="TreeGrafter"/>
</dbReference>
<dbReference type="GO" id="GO:0043022">
    <property type="term" value="F:ribosome binding"/>
    <property type="evidence" value="ECO:0007669"/>
    <property type="project" value="TreeGrafter"/>
</dbReference>
<dbReference type="GO" id="GO:0051083">
    <property type="term" value="P:'de novo' cotranslational protein folding"/>
    <property type="evidence" value="ECO:0007669"/>
    <property type="project" value="TreeGrafter"/>
</dbReference>
<dbReference type="GO" id="GO:0051301">
    <property type="term" value="P:cell division"/>
    <property type="evidence" value="ECO:0007669"/>
    <property type="project" value="UniProtKB-KW"/>
</dbReference>
<dbReference type="GO" id="GO:0061077">
    <property type="term" value="P:chaperone-mediated protein folding"/>
    <property type="evidence" value="ECO:0007669"/>
    <property type="project" value="TreeGrafter"/>
</dbReference>
<dbReference type="GO" id="GO:0015031">
    <property type="term" value="P:protein transport"/>
    <property type="evidence" value="ECO:0007669"/>
    <property type="project" value="UniProtKB-UniRule"/>
</dbReference>
<dbReference type="GO" id="GO:0043335">
    <property type="term" value="P:protein unfolding"/>
    <property type="evidence" value="ECO:0007669"/>
    <property type="project" value="TreeGrafter"/>
</dbReference>
<dbReference type="FunFam" id="3.10.50.40:FF:000019">
    <property type="entry name" value="Trigger factor"/>
    <property type="match status" value="1"/>
</dbReference>
<dbReference type="Gene3D" id="3.10.50.40">
    <property type="match status" value="1"/>
</dbReference>
<dbReference type="Gene3D" id="3.30.70.1050">
    <property type="entry name" value="Trigger factor ribosome-binding domain"/>
    <property type="match status" value="1"/>
</dbReference>
<dbReference type="Gene3D" id="1.10.3120.10">
    <property type="entry name" value="Trigger factor, C-terminal domain"/>
    <property type="match status" value="1"/>
</dbReference>
<dbReference type="HAMAP" id="MF_00303">
    <property type="entry name" value="Trigger_factor_Tig"/>
    <property type="match status" value="1"/>
</dbReference>
<dbReference type="InterPro" id="IPR046357">
    <property type="entry name" value="PPIase_dom_sf"/>
</dbReference>
<dbReference type="InterPro" id="IPR001179">
    <property type="entry name" value="PPIase_FKBP_dom"/>
</dbReference>
<dbReference type="InterPro" id="IPR005215">
    <property type="entry name" value="Trig_fac"/>
</dbReference>
<dbReference type="InterPro" id="IPR008880">
    <property type="entry name" value="Trigger_fac_C"/>
</dbReference>
<dbReference type="InterPro" id="IPR037041">
    <property type="entry name" value="Trigger_fac_C_sf"/>
</dbReference>
<dbReference type="InterPro" id="IPR008881">
    <property type="entry name" value="Trigger_fac_ribosome-bd_bac"/>
</dbReference>
<dbReference type="InterPro" id="IPR036611">
    <property type="entry name" value="Trigger_fac_ribosome-bd_sf"/>
</dbReference>
<dbReference type="InterPro" id="IPR027304">
    <property type="entry name" value="Trigger_fact/SurA_dom_sf"/>
</dbReference>
<dbReference type="NCBIfam" id="TIGR00115">
    <property type="entry name" value="tig"/>
    <property type="match status" value="1"/>
</dbReference>
<dbReference type="PANTHER" id="PTHR30560">
    <property type="entry name" value="TRIGGER FACTOR CHAPERONE AND PEPTIDYL-PROLYL CIS/TRANS ISOMERASE"/>
    <property type="match status" value="1"/>
</dbReference>
<dbReference type="PANTHER" id="PTHR30560:SF3">
    <property type="entry name" value="TRIGGER FACTOR-LIKE PROTEIN TIG, CHLOROPLASTIC"/>
    <property type="match status" value="1"/>
</dbReference>
<dbReference type="Pfam" id="PF00254">
    <property type="entry name" value="FKBP_C"/>
    <property type="match status" value="1"/>
</dbReference>
<dbReference type="Pfam" id="PF05698">
    <property type="entry name" value="Trigger_C"/>
    <property type="match status" value="1"/>
</dbReference>
<dbReference type="Pfam" id="PF05697">
    <property type="entry name" value="Trigger_N"/>
    <property type="match status" value="1"/>
</dbReference>
<dbReference type="PIRSF" id="PIRSF003095">
    <property type="entry name" value="Trigger_factor"/>
    <property type="match status" value="1"/>
</dbReference>
<dbReference type="SUPFAM" id="SSF54534">
    <property type="entry name" value="FKBP-like"/>
    <property type="match status" value="1"/>
</dbReference>
<dbReference type="SUPFAM" id="SSF109998">
    <property type="entry name" value="Triger factor/SurA peptide-binding domain-like"/>
    <property type="match status" value="1"/>
</dbReference>
<dbReference type="SUPFAM" id="SSF102735">
    <property type="entry name" value="Trigger factor ribosome-binding domain"/>
    <property type="match status" value="1"/>
</dbReference>
<dbReference type="PROSITE" id="PS50059">
    <property type="entry name" value="FKBP_PPIASE"/>
    <property type="match status" value="1"/>
</dbReference>
<organism>
    <name type="scientific">Mycobacteroides abscessus (strain ATCC 19977 / DSM 44196 / CCUG 20993 / CIP 104536 / JCM 13569 / NCTC 13031 / TMC 1543 / L948)</name>
    <name type="common">Mycobacterium abscessus</name>
    <dbReference type="NCBI Taxonomy" id="561007"/>
    <lineage>
        <taxon>Bacteria</taxon>
        <taxon>Bacillati</taxon>
        <taxon>Actinomycetota</taxon>
        <taxon>Actinomycetes</taxon>
        <taxon>Mycobacteriales</taxon>
        <taxon>Mycobacteriaceae</taxon>
        <taxon>Mycobacteroides</taxon>
        <taxon>Mycobacteroides abscessus</taxon>
    </lineage>
</organism>
<accession>B1MMV3</accession>